<keyword id="KW-0963">Cytoplasm</keyword>
<keyword id="KW-1185">Reference proteome</keyword>
<keyword id="KW-0704">Schiff base</keyword>
<keyword id="KW-0784">Thiamine biosynthesis</keyword>
<keyword id="KW-0808">Transferase</keyword>
<organism>
    <name type="scientific">Corynebacterium glutamicum (strain ATCC 13032 / DSM 20300 / JCM 1318 / BCRC 11384 / CCUG 27702 / LMG 3730 / NBRC 12168 / NCIMB 10025 / NRRL B-2784 / 534)</name>
    <dbReference type="NCBI Taxonomy" id="196627"/>
    <lineage>
        <taxon>Bacteria</taxon>
        <taxon>Bacillati</taxon>
        <taxon>Actinomycetota</taxon>
        <taxon>Actinomycetes</taxon>
        <taxon>Mycobacteriales</taxon>
        <taxon>Corynebacteriaceae</taxon>
        <taxon>Corynebacterium</taxon>
    </lineage>
</organism>
<evidence type="ECO:0000255" key="1">
    <source>
        <dbReference type="HAMAP-Rule" id="MF_00443"/>
    </source>
</evidence>
<sequence length="260" mass="27249">MLHIADKTFDSHLIMGTGGATSQALLEESLVASGTQLTTVAMRRHQATTSSGESIFAMLRRLEIALLPNTAGCRTARDAVLTAQLAREALDTNWVKVEVIADEHTLLPDTVELLDACELLVHDGFTVLAYTSDDPITASRLEDCGVAAVMPLGSPIGTGLGILNPHNIELICSRASVPVILDAGVGTASDATLAMELGCDGVLLASAINRAQNPVAMAESMFHAVEAGRLAAQAGRIPQRQHAVASSSFEGLASWAEQVL</sequence>
<name>THIG_CORGL</name>
<proteinExistence type="inferred from homology"/>
<reference key="1">
    <citation type="journal article" date="2003" name="Appl. Microbiol. Biotechnol.">
        <title>The Corynebacterium glutamicum genome: features and impacts on biotechnological processes.</title>
        <authorList>
            <person name="Ikeda M."/>
            <person name="Nakagawa S."/>
        </authorList>
    </citation>
    <scope>NUCLEOTIDE SEQUENCE [LARGE SCALE GENOMIC DNA]</scope>
    <source>
        <strain>ATCC 13032 / DSM 20300 / JCM 1318 / BCRC 11384 / CCUG 27702 / LMG 3730 / NBRC 12168 / NCIMB 10025 / NRRL B-2784 / 534</strain>
    </source>
</reference>
<reference key="2">
    <citation type="journal article" date="2003" name="J. Biotechnol.">
        <title>The complete Corynebacterium glutamicum ATCC 13032 genome sequence and its impact on the production of L-aspartate-derived amino acids and vitamins.</title>
        <authorList>
            <person name="Kalinowski J."/>
            <person name="Bathe B."/>
            <person name="Bartels D."/>
            <person name="Bischoff N."/>
            <person name="Bott M."/>
            <person name="Burkovski A."/>
            <person name="Dusch N."/>
            <person name="Eggeling L."/>
            <person name="Eikmanns B.J."/>
            <person name="Gaigalat L."/>
            <person name="Goesmann A."/>
            <person name="Hartmann M."/>
            <person name="Huthmacher K."/>
            <person name="Kraemer R."/>
            <person name="Linke B."/>
            <person name="McHardy A.C."/>
            <person name="Meyer F."/>
            <person name="Moeckel B."/>
            <person name="Pfefferle W."/>
            <person name="Puehler A."/>
            <person name="Rey D.A."/>
            <person name="Rueckert C."/>
            <person name="Rupp O."/>
            <person name="Sahm H."/>
            <person name="Wendisch V.F."/>
            <person name="Wiegraebe I."/>
            <person name="Tauch A."/>
        </authorList>
    </citation>
    <scope>NUCLEOTIDE SEQUENCE [LARGE SCALE GENOMIC DNA]</scope>
    <source>
        <strain>ATCC 13032 / DSM 20300 / JCM 1318 / BCRC 11384 / CCUG 27702 / LMG 3730 / NBRC 12168 / NCIMB 10025 / NRRL B-2784 / 534</strain>
    </source>
</reference>
<gene>
    <name evidence="1" type="primary">thiG</name>
    <name type="ordered locus">Cgl2041</name>
    <name type="ordered locus">cg2239</name>
</gene>
<protein>
    <recommendedName>
        <fullName evidence="1">Thiazole synthase</fullName>
        <ecNumber evidence="1">2.8.1.10</ecNumber>
    </recommendedName>
</protein>
<dbReference type="EC" id="2.8.1.10" evidence="1"/>
<dbReference type="EMBL" id="BA000036">
    <property type="protein sequence ID" value="BAB99434.1"/>
    <property type="molecule type" value="Genomic_DNA"/>
</dbReference>
<dbReference type="EMBL" id="BX927154">
    <property type="protein sequence ID" value="CAF20380.1"/>
    <property type="molecule type" value="Genomic_DNA"/>
</dbReference>
<dbReference type="RefSeq" id="NP_601245.1">
    <property type="nucleotide sequence ID" value="NC_003450.3"/>
</dbReference>
<dbReference type="RefSeq" id="WP_003857587.1">
    <property type="nucleotide sequence ID" value="NC_006958.1"/>
</dbReference>
<dbReference type="SMR" id="Q8NNY6"/>
<dbReference type="STRING" id="196627.cg2239"/>
<dbReference type="KEGG" id="cgb:cg2239"/>
<dbReference type="KEGG" id="cgl:Cgl2041"/>
<dbReference type="PATRIC" id="fig|196627.13.peg.1978"/>
<dbReference type="eggNOG" id="COG2022">
    <property type="taxonomic scope" value="Bacteria"/>
</dbReference>
<dbReference type="HOGENOM" id="CLU_062233_1_0_11"/>
<dbReference type="OrthoDB" id="9805935at2"/>
<dbReference type="BioCyc" id="CORYNE:G18NG-11633-MONOMER"/>
<dbReference type="UniPathway" id="UPA00060"/>
<dbReference type="Proteomes" id="UP000000582">
    <property type="component" value="Chromosome"/>
</dbReference>
<dbReference type="Proteomes" id="UP000001009">
    <property type="component" value="Chromosome"/>
</dbReference>
<dbReference type="GO" id="GO:0005737">
    <property type="term" value="C:cytoplasm"/>
    <property type="evidence" value="ECO:0007669"/>
    <property type="project" value="UniProtKB-SubCell"/>
</dbReference>
<dbReference type="GO" id="GO:1990107">
    <property type="term" value="F:thiazole synthase activity"/>
    <property type="evidence" value="ECO:0007669"/>
    <property type="project" value="UniProtKB-EC"/>
</dbReference>
<dbReference type="GO" id="GO:0009229">
    <property type="term" value="P:thiamine diphosphate biosynthetic process"/>
    <property type="evidence" value="ECO:0007669"/>
    <property type="project" value="UniProtKB-UniRule"/>
</dbReference>
<dbReference type="CDD" id="cd04728">
    <property type="entry name" value="ThiG"/>
    <property type="match status" value="1"/>
</dbReference>
<dbReference type="Gene3D" id="3.20.20.70">
    <property type="entry name" value="Aldolase class I"/>
    <property type="match status" value="1"/>
</dbReference>
<dbReference type="HAMAP" id="MF_00443">
    <property type="entry name" value="ThiG"/>
    <property type="match status" value="1"/>
</dbReference>
<dbReference type="InterPro" id="IPR013785">
    <property type="entry name" value="Aldolase_TIM"/>
</dbReference>
<dbReference type="InterPro" id="IPR033983">
    <property type="entry name" value="Thiazole_synthase_ThiG"/>
</dbReference>
<dbReference type="InterPro" id="IPR008867">
    <property type="entry name" value="ThiG"/>
</dbReference>
<dbReference type="PANTHER" id="PTHR34266">
    <property type="entry name" value="THIAZOLE SYNTHASE"/>
    <property type="match status" value="1"/>
</dbReference>
<dbReference type="PANTHER" id="PTHR34266:SF2">
    <property type="entry name" value="THIAZOLE SYNTHASE"/>
    <property type="match status" value="1"/>
</dbReference>
<dbReference type="Pfam" id="PF05690">
    <property type="entry name" value="ThiG"/>
    <property type="match status" value="1"/>
</dbReference>
<dbReference type="SUPFAM" id="SSF110399">
    <property type="entry name" value="ThiG-like"/>
    <property type="match status" value="1"/>
</dbReference>
<comment type="function">
    <text evidence="1">Catalyzes the rearrangement of 1-deoxy-D-xylulose 5-phosphate (DXP) to produce the thiazole phosphate moiety of thiamine. Sulfur is provided by the thiocarboxylate moiety of the carrier protein ThiS. In vitro, sulfur can be provided by H(2)S.</text>
</comment>
<comment type="catalytic activity">
    <reaction evidence="1">
        <text>[ThiS sulfur-carrier protein]-C-terminal-Gly-aminoethanethioate + 2-iminoacetate + 1-deoxy-D-xylulose 5-phosphate = [ThiS sulfur-carrier protein]-C-terminal Gly-Gly + 2-[(2R,5Z)-2-carboxy-4-methylthiazol-5(2H)-ylidene]ethyl phosphate + 2 H2O + H(+)</text>
        <dbReference type="Rhea" id="RHEA:26297"/>
        <dbReference type="Rhea" id="RHEA-COMP:12909"/>
        <dbReference type="Rhea" id="RHEA-COMP:19908"/>
        <dbReference type="ChEBI" id="CHEBI:15377"/>
        <dbReference type="ChEBI" id="CHEBI:15378"/>
        <dbReference type="ChEBI" id="CHEBI:57792"/>
        <dbReference type="ChEBI" id="CHEBI:62899"/>
        <dbReference type="ChEBI" id="CHEBI:77846"/>
        <dbReference type="ChEBI" id="CHEBI:90778"/>
        <dbReference type="ChEBI" id="CHEBI:232372"/>
        <dbReference type="EC" id="2.8.1.10"/>
    </reaction>
</comment>
<comment type="pathway">
    <text evidence="1">Cofactor biosynthesis; thiamine diphosphate biosynthesis.</text>
</comment>
<comment type="subunit">
    <text evidence="1">Homotetramer. Forms heterodimers with either ThiH or ThiS.</text>
</comment>
<comment type="subcellular location">
    <subcellularLocation>
        <location evidence="1">Cytoplasm</location>
    </subcellularLocation>
</comment>
<comment type="similarity">
    <text evidence="1">Belongs to the ThiG family.</text>
</comment>
<feature type="chain" id="PRO_0000162811" description="Thiazole synthase">
    <location>
        <begin position="1"/>
        <end position="260"/>
    </location>
</feature>
<feature type="active site" description="Schiff-base intermediate with DXP" evidence="1">
    <location>
        <position position="96"/>
    </location>
</feature>
<feature type="binding site" evidence="1">
    <location>
        <position position="157"/>
    </location>
    <ligand>
        <name>1-deoxy-D-xylulose 5-phosphate</name>
        <dbReference type="ChEBI" id="CHEBI:57792"/>
    </ligand>
</feature>
<feature type="binding site" evidence="1">
    <location>
        <begin position="183"/>
        <end position="184"/>
    </location>
    <ligand>
        <name>1-deoxy-D-xylulose 5-phosphate</name>
        <dbReference type="ChEBI" id="CHEBI:57792"/>
    </ligand>
</feature>
<feature type="binding site" evidence="1">
    <location>
        <begin position="205"/>
        <end position="206"/>
    </location>
    <ligand>
        <name>1-deoxy-D-xylulose 5-phosphate</name>
        <dbReference type="ChEBI" id="CHEBI:57792"/>
    </ligand>
</feature>
<accession>Q8NNY6</accession>